<keyword id="KW-0687">Ribonucleoprotein</keyword>
<keyword id="KW-0689">Ribosomal protein</keyword>
<accession>B3DFA5</accession>
<sequence>MACPKKKTSNAKRDQRRAHWRKQAAREAQKALSLGKSVLSGRSNSFVYPTKEEEEGEDEE</sequence>
<feature type="chain" id="PRO_1000120145" description="Large ribosomal subunit protein bL32">
    <location>
        <begin position="1"/>
        <end position="60"/>
    </location>
</feature>
<feature type="region of interest" description="Disordered" evidence="2">
    <location>
        <begin position="1"/>
        <end position="60"/>
    </location>
</feature>
<feature type="compositionally biased region" description="Basic residues" evidence="2">
    <location>
        <begin position="1"/>
        <end position="23"/>
    </location>
</feature>
<name>RL32_MICAN</name>
<evidence type="ECO:0000255" key="1">
    <source>
        <dbReference type="HAMAP-Rule" id="MF_00340"/>
    </source>
</evidence>
<evidence type="ECO:0000256" key="2">
    <source>
        <dbReference type="SAM" id="MobiDB-lite"/>
    </source>
</evidence>
<evidence type="ECO:0000305" key="3"/>
<proteinExistence type="inferred from homology"/>
<reference key="1">
    <citation type="journal article" date="2007" name="DNA Res.">
        <title>Complete genomic structure of the bloom-forming toxic cyanobacterium Microcystis aeruginosa NIES-843.</title>
        <authorList>
            <person name="Kaneko T."/>
            <person name="Nakajima N."/>
            <person name="Okamoto S."/>
            <person name="Suzuki I."/>
            <person name="Tanabe Y."/>
            <person name="Tamaoki M."/>
            <person name="Nakamura Y."/>
            <person name="Kasai F."/>
            <person name="Watanabe A."/>
            <person name="Kawashima K."/>
            <person name="Kishida Y."/>
            <person name="Ono A."/>
            <person name="Shimizu Y."/>
            <person name="Takahashi C."/>
            <person name="Minami C."/>
            <person name="Fujishiro T."/>
            <person name="Kohara M."/>
            <person name="Katoh M."/>
            <person name="Nakazaki N."/>
            <person name="Nakayama S."/>
            <person name="Yamada M."/>
            <person name="Tabata S."/>
            <person name="Watanabe M.M."/>
        </authorList>
    </citation>
    <scope>NUCLEOTIDE SEQUENCE [LARGE SCALE GENOMIC DNA]</scope>
    <source>
        <strain>NIES-843 / IAM M-247</strain>
    </source>
</reference>
<organism>
    <name type="scientific">Microcystis aeruginosa (strain NIES-843 / IAM M-2473)</name>
    <dbReference type="NCBI Taxonomy" id="449447"/>
    <lineage>
        <taxon>Bacteria</taxon>
        <taxon>Bacillati</taxon>
        <taxon>Cyanobacteriota</taxon>
        <taxon>Cyanophyceae</taxon>
        <taxon>Oscillatoriophycideae</taxon>
        <taxon>Chroococcales</taxon>
        <taxon>Microcystaceae</taxon>
        <taxon>Microcystis</taxon>
    </lineage>
</organism>
<dbReference type="EMBL" id="AP009552">
    <property type="protein sequence ID" value="BAG48290.1"/>
    <property type="molecule type" value="Genomic_DNA"/>
</dbReference>
<dbReference type="RefSeq" id="WP_002742494.1">
    <property type="nucleotide sequence ID" value="NC_010296.1"/>
</dbReference>
<dbReference type="SMR" id="B3DFA5"/>
<dbReference type="STRING" id="449447.MAE_46635"/>
<dbReference type="PaxDb" id="449447-MAE_46635"/>
<dbReference type="EnsemblBacteria" id="BAG48290">
    <property type="protein sequence ID" value="BAG48290"/>
    <property type="gene ID" value="MAE_46635"/>
</dbReference>
<dbReference type="GeneID" id="66705571"/>
<dbReference type="KEGG" id="mar:MAE_46635"/>
<dbReference type="eggNOG" id="COG0333">
    <property type="taxonomic scope" value="Bacteria"/>
</dbReference>
<dbReference type="HOGENOM" id="CLU_199882_0_0_3"/>
<dbReference type="BioCyc" id="MAER449447:MAE_RS20250-MONOMER"/>
<dbReference type="Proteomes" id="UP000001510">
    <property type="component" value="Chromosome"/>
</dbReference>
<dbReference type="GO" id="GO:0015934">
    <property type="term" value="C:large ribosomal subunit"/>
    <property type="evidence" value="ECO:0007669"/>
    <property type="project" value="InterPro"/>
</dbReference>
<dbReference type="GO" id="GO:0003735">
    <property type="term" value="F:structural constituent of ribosome"/>
    <property type="evidence" value="ECO:0007669"/>
    <property type="project" value="InterPro"/>
</dbReference>
<dbReference type="GO" id="GO:0006412">
    <property type="term" value="P:translation"/>
    <property type="evidence" value="ECO:0007669"/>
    <property type="project" value="UniProtKB-UniRule"/>
</dbReference>
<dbReference type="Gene3D" id="1.20.5.640">
    <property type="entry name" value="Single helix bin"/>
    <property type="match status" value="1"/>
</dbReference>
<dbReference type="HAMAP" id="MF_00340">
    <property type="entry name" value="Ribosomal_bL32"/>
    <property type="match status" value="1"/>
</dbReference>
<dbReference type="InterPro" id="IPR002677">
    <property type="entry name" value="Ribosomal_bL32"/>
</dbReference>
<dbReference type="InterPro" id="IPR044958">
    <property type="entry name" value="Ribosomal_bL32_plant/cyanobact"/>
</dbReference>
<dbReference type="InterPro" id="IPR011332">
    <property type="entry name" value="Ribosomal_zn-bd"/>
</dbReference>
<dbReference type="NCBIfam" id="TIGR01031">
    <property type="entry name" value="rpmF_bact"/>
    <property type="match status" value="1"/>
</dbReference>
<dbReference type="PANTHER" id="PTHR36083">
    <property type="entry name" value="50S RIBOSOMAL PROTEIN L32, CHLOROPLASTIC"/>
    <property type="match status" value="1"/>
</dbReference>
<dbReference type="PANTHER" id="PTHR36083:SF1">
    <property type="entry name" value="LARGE RIBOSOMAL SUBUNIT PROTEIN BL32C"/>
    <property type="match status" value="1"/>
</dbReference>
<dbReference type="Pfam" id="PF01783">
    <property type="entry name" value="Ribosomal_L32p"/>
    <property type="match status" value="1"/>
</dbReference>
<dbReference type="SUPFAM" id="SSF57829">
    <property type="entry name" value="Zn-binding ribosomal proteins"/>
    <property type="match status" value="1"/>
</dbReference>
<protein>
    <recommendedName>
        <fullName evidence="1">Large ribosomal subunit protein bL32</fullName>
    </recommendedName>
    <alternativeName>
        <fullName evidence="3">50S ribosomal protein L32</fullName>
    </alternativeName>
</protein>
<comment type="similarity">
    <text evidence="1">Belongs to the bacterial ribosomal protein bL32 family.</text>
</comment>
<gene>
    <name evidence="1" type="primary">rpmF</name>
    <name evidence="1" type="synonym">rpl32</name>
    <name type="ordered locus">MAE_46635</name>
</gene>